<feature type="chain" id="PRO_1000097603" description="3-dehydroquinate dehydratase">
    <location>
        <begin position="1"/>
        <end position="167"/>
    </location>
</feature>
<feature type="active site" description="Proton acceptor" evidence="1">
    <location>
        <position position="22"/>
    </location>
</feature>
<feature type="active site" description="Proton donor" evidence="1">
    <location>
        <position position="102"/>
    </location>
</feature>
<feature type="binding site" evidence="1">
    <location>
        <position position="76"/>
    </location>
    <ligand>
        <name>substrate</name>
    </ligand>
</feature>
<feature type="binding site" evidence="1">
    <location>
        <position position="82"/>
    </location>
    <ligand>
        <name>substrate</name>
    </ligand>
</feature>
<feature type="binding site" evidence="1">
    <location>
        <position position="89"/>
    </location>
    <ligand>
        <name>substrate</name>
    </ligand>
</feature>
<feature type="binding site" evidence="1">
    <location>
        <begin position="103"/>
        <end position="104"/>
    </location>
    <ligand>
        <name>substrate</name>
    </ligand>
</feature>
<feature type="binding site" evidence="1">
    <location>
        <position position="113"/>
    </location>
    <ligand>
        <name>substrate</name>
    </ligand>
</feature>
<feature type="site" description="Transition state stabilizer" evidence="1">
    <location>
        <position position="17"/>
    </location>
</feature>
<protein>
    <recommendedName>
        <fullName evidence="1">3-dehydroquinate dehydratase</fullName>
        <shortName evidence="1">3-dehydroquinase</shortName>
        <ecNumber evidence="1">4.2.1.10</ecNumber>
    </recommendedName>
    <alternativeName>
        <fullName evidence="1">Type II DHQase</fullName>
    </alternativeName>
</protein>
<sequence>MKILVIQGPNLNMLGHRDPRLYGMVTLDQIHEIMQTFVKQGNLDVELEFFQTNFEGEIIDKIQESVGSDYEGIIINPGAFSHTSIAIADAIMLAGKPVIEVHLTNIQAREEFRKNSYTGAACGGVIMGFGPLGYNMALMAMVNILAEMKAFQEAQKNNPNNPINNQK</sequence>
<accession>B5Z6F6</accession>
<gene>
    <name evidence="1" type="primary">aroQ</name>
    <name type="ordered locus">HPG27_390</name>
</gene>
<dbReference type="EC" id="4.2.1.10" evidence="1"/>
<dbReference type="EMBL" id="CP001173">
    <property type="protein sequence ID" value="ACI27155.1"/>
    <property type="molecule type" value="Genomic_DNA"/>
</dbReference>
<dbReference type="RefSeq" id="WP_000699284.1">
    <property type="nucleotide sequence ID" value="NC_011333.1"/>
</dbReference>
<dbReference type="SMR" id="B5Z6F6"/>
<dbReference type="KEGG" id="hpg:HPG27_390"/>
<dbReference type="HOGENOM" id="CLU_090968_3_0_7"/>
<dbReference type="UniPathway" id="UPA00053">
    <property type="reaction ID" value="UER00086"/>
</dbReference>
<dbReference type="Proteomes" id="UP000001735">
    <property type="component" value="Chromosome"/>
</dbReference>
<dbReference type="GO" id="GO:0003855">
    <property type="term" value="F:3-dehydroquinate dehydratase activity"/>
    <property type="evidence" value="ECO:0007669"/>
    <property type="project" value="UniProtKB-UniRule"/>
</dbReference>
<dbReference type="GO" id="GO:0008652">
    <property type="term" value="P:amino acid biosynthetic process"/>
    <property type="evidence" value="ECO:0007669"/>
    <property type="project" value="UniProtKB-KW"/>
</dbReference>
<dbReference type="GO" id="GO:0009073">
    <property type="term" value="P:aromatic amino acid family biosynthetic process"/>
    <property type="evidence" value="ECO:0007669"/>
    <property type="project" value="UniProtKB-KW"/>
</dbReference>
<dbReference type="GO" id="GO:0009423">
    <property type="term" value="P:chorismate biosynthetic process"/>
    <property type="evidence" value="ECO:0007669"/>
    <property type="project" value="UniProtKB-UniRule"/>
</dbReference>
<dbReference type="GO" id="GO:0019631">
    <property type="term" value="P:quinate catabolic process"/>
    <property type="evidence" value="ECO:0007669"/>
    <property type="project" value="TreeGrafter"/>
</dbReference>
<dbReference type="CDD" id="cd00466">
    <property type="entry name" value="DHQase_II"/>
    <property type="match status" value="1"/>
</dbReference>
<dbReference type="Gene3D" id="3.40.50.9100">
    <property type="entry name" value="Dehydroquinase, class II"/>
    <property type="match status" value="1"/>
</dbReference>
<dbReference type="HAMAP" id="MF_00169">
    <property type="entry name" value="AroQ"/>
    <property type="match status" value="1"/>
</dbReference>
<dbReference type="InterPro" id="IPR001874">
    <property type="entry name" value="DHquinase_II"/>
</dbReference>
<dbReference type="InterPro" id="IPR018509">
    <property type="entry name" value="DHquinase_II_CS"/>
</dbReference>
<dbReference type="InterPro" id="IPR036441">
    <property type="entry name" value="DHquinase_II_sf"/>
</dbReference>
<dbReference type="NCBIfam" id="TIGR01088">
    <property type="entry name" value="aroQ"/>
    <property type="match status" value="1"/>
</dbReference>
<dbReference type="NCBIfam" id="NF003805">
    <property type="entry name" value="PRK05395.1-2"/>
    <property type="match status" value="1"/>
</dbReference>
<dbReference type="NCBIfam" id="NF003806">
    <property type="entry name" value="PRK05395.1-3"/>
    <property type="match status" value="1"/>
</dbReference>
<dbReference type="NCBIfam" id="NF003807">
    <property type="entry name" value="PRK05395.1-4"/>
    <property type="match status" value="1"/>
</dbReference>
<dbReference type="PANTHER" id="PTHR21272">
    <property type="entry name" value="CATABOLIC 3-DEHYDROQUINASE"/>
    <property type="match status" value="1"/>
</dbReference>
<dbReference type="PANTHER" id="PTHR21272:SF3">
    <property type="entry name" value="CATABOLIC 3-DEHYDROQUINASE"/>
    <property type="match status" value="1"/>
</dbReference>
<dbReference type="Pfam" id="PF01220">
    <property type="entry name" value="DHquinase_II"/>
    <property type="match status" value="1"/>
</dbReference>
<dbReference type="PIRSF" id="PIRSF001399">
    <property type="entry name" value="DHquinase_II"/>
    <property type="match status" value="1"/>
</dbReference>
<dbReference type="SUPFAM" id="SSF52304">
    <property type="entry name" value="Type II 3-dehydroquinate dehydratase"/>
    <property type="match status" value="1"/>
</dbReference>
<dbReference type="PROSITE" id="PS01029">
    <property type="entry name" value="DEHYDROQUINASE_II"/>
    <property type="match status" value="1"/>
</dbReference>
<comment type="function">
    <text evidence="1">Catalyzes a trans-dehydration via an enolate intermediate.</text>
</comment>
<comment type="catalytic activity">
    <reaction evidence="1">
        <text>3-dehydroquinate = 3-dehydroshikimate + H2O</text>
        <dbReference type="Rhea" id="RHEA:21096"/>
        <dbReference type="ChEBI" id="CHEBI:15377"/>
        <dbReference type="ChEBI" id="CHEBI:16630"/>
        <dbReference type="ChEBI" id="CHEBI:32364"/>
        <dbReference type="EC" id="4.2.1.10"/>
    </reaction>
</comment>
<comment type="pathway">
    <text evidence="1">Metabolic intermediate biosynthesis; chorismate biosynthesis; chorismate from D-erythrose 4-phosphate and phosphoenolpyruvate: step 3/7.</text>
</comment>
<comment type="subunit">
    <text evidence="1">Homododecamer.</text>
</comment>
<comment type="similarity">
    <text evidence="1">Belongs to the type-II 3-dehydroquinase family.</text>
</comment>
<name>AROQ_HELPG</name>
<evidence type="ECO:0000255" key="1">
    <source>
        <dbReference type="HAMAP-Rule" id="MF_00169"/>
    </source>
</evidence>
<proteinExistence type="inferred from homology"/>
<reference key="1">
    <citation type="journal article" date="2009" name="J. Bacteriol.">
        <title>The complete genome sequence of Helicobacter pylori strain G27.</title>
        <authorList>
            <person name="Baltrus D.A."/>
            <person name="Amieva M.R."/>
            <person name="Covacci A."/>
            <person name="Lowe T.M."/>
            <person name="Merrell D.S."/>
            <person name="Ottemann K.M."/>
            <person name="Stein M."/>
            <person name="Salama N.R."/>
            <person name="Guillemin K."/>
        </authorList>
    </citation>
    <scope>NUCLEOTIDE SEQUENCE [LARGE SCALE GENOMIC DNA]</scope>
    <source>
        <strain>G27</strain>
    </source>
</reference>
<organism>
    <name type="scientific">Helicobacter pylori (strain G27)</name>
    <dbReference type="NCBI Taxonomy" id="563041"/>
    <lineage>
        <taxon>Bacteria</taxon>
        <taxon>Pseudomonadati</taxon>
        <taxon>Campylobacterota</taxon>
        <taxon>Epsilonproteobacteria</taxon>
        <taxon>Campylobacterales</taxon>
        <taxon>Helicobacteraceae</taxon>
        <taxon>Helicobacter</taxon>
    </lineage>
</organism>
<keyword id="KW-0028">Amino-acid biosynthesis</keyword>
<keyword id="KW-0057">Aromatic amino acid biosynthesis</keyword>
<keyword id="KW-0456">Lyase</keyword>
<keyword id="KW-1185">Reference proteome</keyword>